<accession>A3NBG6</accession>
<protein>
    <recommendedName>
        <fullName evidence="1">Imidazolonepropionase</fullName>
        <ecNumber evidence="1">3.5.2.7</ecNumber>
    </recommendedName>
    <alternativeName>
        <fullName evidence="1">Imidazolone-5-propionate hydrolase</fullName>
    </alternativeName>
</protein>
<keyword id="KW-0963">Cytoplasm</keyword>
<keyword id="KW-0369">Histidine metabolism</keyword>
<keyword id="KW-0378">Hydrolase</keyword>
<keyword id="KW-0408">Iron</keyword>
<keyword id="KW-0479">Metal-binding</keyword>
<keyword id="KW-0862">Zinc</keyword>
<evidence type="ECO:0000255" key="1">
    <source>
        <dbReference type="HAMAP-Rule" id="MF_00372"/>
    </source>
</evidence>
<feature type="chain" id="PRO_1000007141" description="Imidazolonepropionase">
    <location>
        <begin position="1"/>
        <end position="407"/>
    </location>
</feature>
<feature type="binding site" evidence="1">
    <location>
        <position position="68"/>
    </location>
    <ligand>
        <name>Fe(3+)</name>
        <dbReference type="ChEBI" id="CHEBI:29034"/>
    </ligand>
</feature>
<feature type="binding site" evidence="1">
    <location>
        <position position="68"/>
    </location>
    <ligand>
        <name>Zn(2+)</name>
        <dbReference type="ChEBI" id="CHEBI:29105"/>
    </ligand>
</feature>
<feature type="binding site" evidence="1">
    <location>
        <position position="70"/>
    </location>
    <ligand>
        <name>Fe(3+)</name>
        <dbReference type="ChEBI" id="CHEBI:29034"/>
    </ligand>
</feature>
<feature type="binding site" evidence="1">
    <location>
        <position position="70"/>
    </location>
    <ligand>
        <name>Zn(2+)</name>
        <dbReference type="ChEBI" id="CHEBI:29105"/>
    </ligand>
</feature>
<feature type="binding site" evidence="1">
    <location>
        <position position="77"/>
    </location>
    <ligand>
        <name>4-imidazolone-5-propanoate</name>
        <dbReference type="ChEBI" id="CHEBI:77893"/>
    </ligand>
</feature>
<feature type="binding site" evidence="1">
    <location>
        <position position="140"/>
    </location>
    <ligand>
        <name>4-imidazolone-5-propanoate</name>
        <dbReference type="ChEBI" id="CHEBI:77893"/>
    </ligand>
</feature>
<feature type="binding site" evidence="1">
    <location>
        <position position="140"/>
    </location>
    <ligand>
        <name>N-formimidoyl-L-glutamate</name>
        <dbReference type="ChEBI" id="CHEBI:58928"/>
    </ligand>
</feature>
<feature type="binding site" evidence="1">
    <location>
        <position position="173"/>
    </location>
    <ligand>
        <name>4-imidazolone-5-propanoate</name>
        <dbReference type="ChEBI" id="CHEBI:77893"/>
    </ligand>
</feature>
<feature type="binding site" evidence="1">
    <location>
        <position position="238"/>
    </location>
    <ligand>
        <name>Fe(3+)</name>
        <dbReference type="ChEBI" id="CHEBI:29034"/>
    </ligand>
</feature>
<feature type="binding site" evidence="1">
    <location>
        <position position="238"/>
    </location>
    <ligand>
        <name>Zn(2+)</name>
        <dbReference type="ChEBI" id="CHEBI:29105"/>
    </ligand>
</feature>
<feature type="binding site" evidence="1">
    <location>
        <position position="241"/>
    </location>
    <ligand>
        <name>4-imidazolone-5-propanoate</name>
        <dbReference type="ChEBI" id="CHEBI:77893"/>
    </ligand>
</feature>
<feature type="binding site" evidence="1">
    <location>
        <position position="313"/>
    </location>
    <ligand>
        <name>Fe(3+)</name>
        <dbReference type="ChEBI" id="CHEBI:29034"/>
    </ligand>
</feature>
<feature type="binding site" evidence="1">
    <location>
        <position position="313"/>
    </location>
    <ligand>
        <name>Zn(2+)</name>
        <dbReference type="ChEBI" id="CHEBI:29105"/>
    </ligand>
</feature>
<feature type="binding site" evidence="1">
    <location>
        <position position="315"/>
    </location>
    <ligand>
        <name>N-formimidoyl-L-glutamate</name>
        <dbReference type="ChEBI" id="CHEBI:58928"/>
    </ligand>
</feature>
<feature type="binding site" evidence="1">
    <location>
        <position position="317"/>
    </location>
    <ligand>
        <name>N-formimidoyl-L-glutamate</name>
        <dbReference type="ChEBI" id="CHEBI:58928"/>
    </ligand>
</feature>
<feature type="binding site" evidence="1">
    <location>
        <position position="318"/>
    </location>
    <ligand>
        <name>4-imidazolone-5-propanoate</name>
        <dbReference type="ChEBI" id="CHEBI:77893"/>
    </ligand>
</feature>
<sequence length="407" mass="43815">MKSILWHNLKLCAHGDPNDTIADAAIAVNGDGTIAWTGRASDVPAGYVHWPREDLRGAWVTPGLVDCHTHLVYGGQRADEFAQRLAGASYEEIARRGGGIVSTVRATRDASEAALFEQACARLRPLLAEGVTAIEIKSGYGLELASERRMLRVARQLGERFPVSVYTTFLGAHALPPEYAGRADEYIDEVCERMLPALADEGLVDAVDVFCERIGFTLAQSERVFEAAARRGLPVKMHAEQLSNGGGSALAARYRALSADHLEYLDAAGVAAMRASGTTAVLLPGAYYFIRETKLPPIDLLRRHGVPIALATDHNPGTSPLTSLLLTMNMGCTVFKLTVQEALLGVTRHAAAALGASDRHGSLAPGRQADFAVWPVSTLAELAYWFGRPLCERVVKGGVTVFTRDAR</sequence>
<gene>
    <name evidence="1" type="primary">hutI</name>
    <name type="ordered locus">BURPS668_2663</name>
</gene>
<comment type="function">
    <text evidence="1">Catalyzes the hydrolytic cleavage of the carbon-nitrogen bond in imidazolone-5-propanoate to yield N-formimidoyl-L-glutamate. It is the third step in the universal histidine degradation pathway.</text>
</comment>
<comment type="catalytic activity">
    <reaction evidence="1">
        <text>4-imidazolone-5-propanoate + H2O = N-formimidoyl-L-glutamate</text>
        <dbReference type="Rhea" id="RHEA:23660"/>
        <dbReference type="ChEBI" id="CHEBI:15377"/>
        <dbReference type="ChEBI" id="CHEBI:58928"/>
        <dbReference type="ChEBI" id="CHEBI:77893"/>
        <dbReference type="EC" id="3.5.2.7"/>
    </reaction>
</comment>
<comment type="cofactor">
    <cofactor evidence="1">
        <name>Zn(2+)</name>
        <dbReference type="ChEBI" id="CHEBI:29105"/>
    </cofactor>
    <cofactor evidence="1">
        <name>Fe(3+)</name>
        <dbReference type="ChEBI" id="CHEBI:29034"/>
    </cofactor>
    <text evidence="1">Binds 1 zinc or iron ion per subunit.</text>
</comment>
<comment type="pathway">
    <text evidence="1">Amino-acid degradation; L-histidine degradation into L-glutamate; N-formimidoyl-L-glutamate from L-histidine: step 3/3.</text>
</comment>
<comment type="subcellular location">
    <subcellularLocation>
        <location evidence="1">Cytoplasm</location>
    </subcellularLocation>
</comment>
<comment type="similarity">
    <text evidence="1">Belongs to the metallo-dependent hydrolases superfamily. HutI family.</text>
</comment>
<proteinExistence type="inferred from homology"/>
<name>HUTI_BURP6</name>
<organism>
    <name type="scientific">Burkholderia pseudomallei (strain 668)</name>
    <dbReference type="NCBI Taxonomy" id="320373"/>
    <lineage>
        <taxon>Bacteria</taxon>
        <taxon>Pseudomonadati</taxon>
        <taxon>Pseudomonadota</taxon>
        <taxon>Betaproteobacteria</taxon>
        <taxon>Burkholderiales</taxon>
        <taxon>Burkholderiaceae</taxon>
        <taxon>Burkholderia</taxon>
        <taxon>pseudomallei group</taxon>
    </lineage>
</organism>
<dbReference type="EC" id="3.5.2.7" evidence="1"/>
<dbReference type="EMBL" id="CP000570">
    <property type="protein sequence ID" value="ABN82918.1"/>
    <property type="molecule type" value="Genomic_DNA"/>
</dbReference>
<dbReference type="RefSeq" id="WP_004546775.1">
    <property type="nucleotide sequence ID" value="NC_009074.1"/>
</dbReference>
<dbReference type="SMR" id="A3NBG6"/>
<dbReference type="KEGG" id="bpd:BURPS668_2663"/>
<dbReference type="HOGENOM" id="CLU_041647_0_0_4"/>
<dbReference type="UniPathway" id="UPA00379">
    <property type="reaction ID" value="UER00551"/>
</dbReference>
<dbReference type="GO" id="GO:0005737">
    <property type="term" value="C:cytoplasm"/>
    <property type="evidence" value="ECO:0007669"/>
    <property type="project" value="UniProtKB-SubCell"/>
</dbReference>
<dbReference type="GO" id="GO:0050480">
    <property type="term" value="F:imidazolonepropionase activity"/>
    <property type="evidence" value="ECO:0007669"/>
    <property type="project" value="UniProtKB-UniRule"/>
</dbReference>
<dbReference type="GO" id="GO:0005506">
    <property type="term" value="F:iron ion binding"/>
    <property type="evidence" value="ECO:0007669"/>
    <property type="project" value="UniProtKB-UniRule"/>
</dbReference>
<dbReference type="GO" id="GO:0008270">
    <property type="term" value="F:zinc ion binding"/>
    <property type="evidence" value="ECO:0007669"/>
    <property type="project" value="UniProtKB-UniRule"/>
</dbReference>
<dbReference type="GO" id="GO:0019556">
    <property type="term" value="P:L-histidine catabolic process to glutamate and formamide"/>
    <property type="evidence" value="ECO:0007669"/>
    <property type="project" value="UniProtKB-UniPathway"/>
</dbReference>
<dbReference type="GO" id="GO:0019557">
    <property type="term" value="P:L-histidine catabolic process to glutamate and formate"/>
    <property type="evidence" value="ECO:0007669"/>
    <property type="project" value="UniProtKB-UniPathway"/>
</dbReference>
<dbReference type="CDD" id="cd01296">
    <property type="entry name" value="Imidazolone-5PH"/>
    <property type="match status" value="1"/>
</dbReference>
<dbReference type="FunFam" id="3.20.20.140:FF:000007">
    <property type="entry name" value="Imidazolonepropionase"/>
    <property type="match status" value="1"/>
</dbReference>
<dbReference type="Gene3D" id="3.20.20.140">
    <property type="entry name" value="Metal-dependent hydrolases"/>
    <property type="match status" value="1"/>
</dbReference>
<dbReference type="Gene3D" id="2.30.40.10">
    <property type="entry name" value="Urease, subunit C, domain 1"/>
    <property type="match status" value="1"/>
</dbReference>
<dbReference type="HAMAP" id="MF_00372">
    <property type="entry name" value="HutI"/>
    <property type="match status" value="1"/>
</dbReference>
<dbReference type="InterPro" id="IPR006680">
    <property type="entry name" value="Amidohydro-rel"/>
</dbReference>
<dbReference type="InterPro" id="IPR005920">
    <property type="entry name" value="HutI"/>
</dbReference>
<dbReference type="InterPro" id="IPR011059">
    <property type="entry name" value="Metal-dep_hydrolase_composite"/>
</dbReference>
<dbReference type="InterPro" id="IPR032466">
    <property type="entry name" value="Metal_Hydrolase"/>
</dbReference>
<dbReference type="NCBIfam" id="TIGR01224">
    <property type="entry name" value="hutI"/>
    <property type="match status" value="1"/>
</dbReference>
<dbReference type="PANTHER" id="PTHR42752">
    <property type="entry name" value="IMIDAZOLONEPROPIONASE"/>
    <property type="match status" value="1"/>
</dbReference>
<dbReference type="PANTHER" id="PTHR42752:SF1">
    <property type="entry name" value="IMIDAZOLONEPROPIONASE-RELATED"/>
    <property type="match status" value="1"/>
</dbReference>
<dbReference type="Pfam" id="PF01979">
    <property type="entry name" value="Amidohydro_1"/>
    <property type="match status" value="1"/>
</dbReference>
<dbReference type="SUPFAM" id="SSF51338">
    <property type="entry name" value="Composite domain of metallo-dependent hydrolases"/>
    <property type="match status" value="1"/>
</dbReference>
<dbReference type="SUPFAM" id="SSF51556">
    <property type="entry name" value="Metallo-dependent hydrolases"/>
    <property type="match status" value="1"/>
</dbReference>
<reference key="1">
    <citation type="journal article" date="2010" name="Genome Biol. Evol.">
        <title>Continuing evolution of Burkholderia mallei through genome reduction and large-scale rearrangements.</title>
        <authorList>
            <person name="Losada L."/>
            <person name="Ronning C.M."/>
            <person name="DeShazer D."/>
            <person name="Woods D."/>
            <person name="Fedorova N."/>
            <person name="Kim H.S."/>
            <person name="Shabalina S.A."/>
            <person name="Pearson T.R."/>
            <person name="Brinkac L."/>
            <person name="Tan P."/>
            <person name="Nandi T."/>
            <person name="Crabtree J."/>
            <person name="Badger J."/>
            <person name="Beckstrom-Sternberg S."/>
            <person name="Saqib M."/>
            <person name="Schutzer S.E."/>
            <person name="Keim P."/>
            <person name="Nierman W.C."/>
        </authorList>
    </citation>
    <scope>NUCLEOTIDE SEQUENCE [LARGE SCALE GENOMIC DNA]</scope>
    <source>
        <strain>668</strain>
    </source>
</reference>